<feature type="chain" id="PRO_1000139883" description="Glycogen debranching enzyme">
    <location>
        <begin position="1"/>
        <end position="662"/>
    </location>
</feature>
<feature type="active site" description="Nucleophile" evidence="1">
    <location>
        <position position="338"/>
    </location>
</feature>
<feature type="active site" description="Proton donor" evidence="1">
    <location>
        <position position="373"/>
    </location>
</feature>
<feature type="site" description="Transition state stabilizer" evidence="1">
    <location>
        <position position="445"/>
    </location>
</feature>
<reference key="1">
    <citation type="submission" date="2008-02" db="EMBL/GenBank/DDBJ databases">
        <title>Complete sequence of Yersinia pseudotuberculosis YPIII.</title>
        <authorList>
            <consortium name="US DOE Joint Genome Institute"/>
            <person name="Copeland A."/>
            <person name="Lucas S."/>
            <person name="Lapidus A."/>
            <person name="Glavina del Rio T."/>
            <person name="Dalin E."/>
            <person name="Tice H."/>
            <person name="Bruce D."/>
            <person name="Goodwin L."/>
            <person name="Pitluck S."/>
            <person name="Munk A.C."/>
            <person name="Brettin T."/>
            <person name="Detter J.C."/>
            <person name="Han C."/>
            <person name="Tapia R."/>
            <person name="Schmutz J."/>
            <person name="Larimer F."/>
            <person name="Land M."/>
            <person name="Hauser L."/>
            <person name="Challacombe J.F."/>
            <person name="Green L."/>
            <person name="Lindler L.E."/>
            <person name="Nikolich M.P."/>
            <person name="Richardson P."/>
        </authorList>
    </citation>
    <scope>NUCLEOTIDE SEQUENCE [LARGE SCALE GENOMIC DNA]</scope>
    <source>
        <strain>YPIII</strain>
    </source>
</reference>
<sequence>MAVLTHGSPTPSGAYFDGKGINFTLFSAHAEQVTLCLFDEQGQERQIAMPARTGDIWHGYLPGGKPGQRYGYRVSGPFDPSRGHRFNPHKLLIDPRTRALEGKVGDDPRFTGGVSQPDVRDSAAALPKCLVIHEEYDWQGDKPPAIPWGNTVIYEAHVRGLTQLHPDIPPELRGTYAALAHPALIEHLKTLGITTLELLPVQFHIDEPRLQKMGLSNYWGYNVLAPFAVDPDYASGREGISPLRELRDAVKALHNAGIEVILDVVFNHSAELDVFGPTLCQRGIDNASYYWLTPDGEYDNITGCGNALRLSHPYVTQWVIDCLNYWRDSCHVDGFRFDLGTVLGRTPAFDQHAPLFAALAADERLSACKLIAEPWDIGLGGYQLGNFPTGFSEWNDQYRDAMRGFWLRGEVPRGTFAQHFAASSRLFEQRGRLPSASINQITAHDGFTLLDLLCFNQKHNQMNGEENRDGSDNNHSNNFGCEGLVADAAIWQRRKACQRALLTTLLLSQGTPMLLAGDEQGHSQQGNNNAYCQNNILTWLDWGSADRALMTFTADLIRLRQQIPALTQDQWWQSGDSNVQWLDSQGQALSDAAWEQGCQQQLQILLSQRWLVLINATDHECEMHLPEGEWEGIPPFGVSDHAERLTTWRGSAHTICVLIKRD</sequence>
<protein>
    <recommendedName>
        <fullName evidence="1">Glycogen debranching enzyme</fullName>
        <ecNumber evidence="1">3.2.1.196</ecNumber>
    </recommendedName>
    <alternativeName>
        <fullName evidence="1">Limit dextrin alpha-1,6-maltotetraose-hydrolase</fullName>
    </alternativeName>
</protein>
<name>GLGX_YERPY</name>
<gene>
    <name evidence="1" type="primary">glgX</name>
    <name type="ordered locus">YPK_0148</name>
</gene>
<comment type="function">
    <text evidence="1">Removes maltotriose and maltotetraose chains that are attached by 1,6-alpha-linkage to the limit dextrin main chain, generating a debranched limit dextrin.</text>
</comment>
<comment type="catalytic activity">
    <reaction evidence="1">
        <text>Hydrolysis of (1-&gt;6)-alpha-D-glucosidic linkages to branches with degrees of polymerization of three or four glucose residues in limit dextrin.</text>
        <dbReference type="EC" id="3.2.1.196"/>
    </reaction>
</comment>
<comment type="pathway">
    <text evidence="1">Glycan degradation; glycogen degradation.</text>
</comment>
<comment type="similarity">
    <text evidence="1">Belongs to the glycosyl hydrolase 13 family.</text>
</comment>
<dbReference type="EC" id="3.2.1.196" evidence="1"/>
<dbReference type="EMBL" id="CP000950">
    <property type="protein sequence ID" value="ACA66461.1"/>
    <property type="molecule type" value="Genomic_DNA"/>
</dbReference>
<dbReference type="RefSeq" id="WP_011193250.1">
    <property type="nucleotide sequence ID" value="NZ_CP009792.1"/>
</dbReference>
<dbReference type="SMR" id="B1JHX8"/>
<dbReference type="CAZy" id="CBM48">
    <property type="family name" value="Carbohydrate-Binding Module Family 48"/>
</dbReference>
<dbReference type="CAZy" id="GH13">
    <property type="family name" value="Glycoside Hydrolase Family 13"/>
</dbReference>
<dbReference type="GeneID" id="49784217"/>
<dbReference type="KEGG" id="ypy:YPK_0148"/>
<dbReference type="PATRIC" id="fig|502800.11.peg.754"/>
<dbReference type="UniPathway" id="UPA00165"/>
<dbReference type="GO" id="GO:0004133">
    <property type="term" value="F:glycogen debranching enzyme activity"/>
    <property type="evidence" value="ECO:0007669"/>
    <property type="project" value="UniProtKB-UniRule"/>
</dbReference>
<dbReference type="GO" id="GO:0004553">
    <property type="term" value="F:hydrolase activity, hydrolyzing O-glycosyl compounds"/>
    <property type="evidence" value="ECO:0007669"/>
    <property type="project" value="InterPro"/>
</dbReference>
<dbReference type="GO" id="GO:0005980">
    <property type="term" value="P:glycogen catabolic process"/>
    <property type="evidence" value="ECO:0007669"/>
    <property type="project" value="UniProtKB-UniRule"/>
</dbReference>
<dbReference type="CDD" id="cd11326">
    <property type="entry name" value="AmyAc_Glg_debranch"/>
    <property type="match status" value="1"/>
</dbReference>
<dbReference type="CDD" id="cd02856">
    <property type="entry name" value="E_set_GDE_Isoamylase_N"/>
    <property type="match status" value="1"/>
</dbReference>
<dbReference type="Gene3D" id="3.20.20.80">
    <property type="entry name" value="Glycosidases"/>
    <property type="match status" value="1"/>
</dbReference>
<dbReference type="Gene3D" id="2.60.40.1180">
    <property type="entry name" value="Golgi alpha-mannosidase II"/>
    <property type="match status" value="1"/>
</dbReference>
<dbReference type="Gene3D" id="2.60.40.10">
    <property type="entry name" value="Immunoglobulins"/>
    <property type="match status" value="1"/>
</dbReference>
<dbReference type="HAMAP" id="MF_01248">
    <property type="entry name" value="GlgX"/>
    <property type="match status" value="1"/>
</dbReference>
<dbReference type="InterPro" id="IPR040784">
    <property type="entry name" value="GlgX_C"/>
</dbReference>
<dbReference type="InterPro" id="IPR044505">
    <property type="entry name" value="GlgX_Isoamylase_N_E_set"/>
</dbReference>
<dbReference type="InterPro" id="IPR006047">
    <property type="entry name" value="Glyco_hydro_13_cat_dom"/>
</dbReference>
<dbReference type="InterPro" id="IPR004193">
    <property type="entry name" value="Glyco_hydro_13_N"/>
</dbReference>
<dbReference type="InterPro" id="IPR013780">
    <property type="entry name" value="Glyco_hydro_b"/>
</dbReference>
<dbReference type="InterPro" id="IPR022844">
    <property type="entry name" value="Glycogen_debranch_bac"/>
</dbReference>
<dbReference type="InterPro" id="IPR011837">
    <property type="entry name" value="Glycogen_debranch_GlgX"/>
</dbReference>
<dbReference type="InterPro" id="IPR017853">
    <property type="entry name" value="Glycoside_hydrolase_SF"/>
</dbReference>
<dbReference type="InterPro" id="IPR013783">
    <property type="entry name" value="Ig-like_fold"/>
</dbReference>
<dbReference type="InterPro" id="IPR014756">
    <property type="entry name" value="Ig_E-set"/>
</dbReference>
<dbReference type="NCBIfam" id="TIGR02100">
    <property type="entry name" value="glgX_debranch"/>
    <property type="match status" value="1"/>
</dbReference>
<dbReference type="NCBIfam" id="NF002983">
    <property type="entry name" value="PRK03705.1"/>
    <property type="match status" value="1"/>
</dbReference>
<dbReference type="PANTHER" id="PTHR43002">
    <property type="entry name" value="GLYCOGEN DEBRANCHING ENZYME"/>
    <property type="match status" value="1"/>
</dbReference>
<dbReference type="Pfam" id="PF02922">
    <property type="entry name" value="CBM_48"/>
    <property type="match status" value="1"/>
</dbReference>
<dbReference type="Pfam" id="PF18390">
    <property type="entry name" value="GlgX_C"/>
    <property type="match status" value="1"/>
</dbReference>
<dbReference type="SMART" id="SM00642">
    <property type="entry name" value="Aamy"/>
    <property type="match status" value="1"/>
</dbReference>
<dbReference type="SUPFAM" id="SSF51445">
    <property type="entry name" value="(Trans)glycosidases"/>
    <property type="match status" value="1"/>
</dbReference>
<dbReference type="SUPFAM" id="SSF81296">
    <property type="entry name" value="E set domains"/>
    <property type="match status" value="1"/>
</dbReference>
<dbReference type="SUPFAM" id="SSF51011">
    <property type="entry name" value="Glycosyl hydrolase domain"/>
    <property type="match status" value="1"/>
</dbReference>
<organism>
    <name type="scientific">Yersinia pseudotuberculosis serotype O:3 (strain YPIII)</name>
    <dbReference type="NCBI Taxonomy" id="502800"/>
    <lineage>
        <taxon>Bacteria</taxon>
        <taxon>Pseudomonadati</taxon>
        <taxon>Pseudomonadota</taxon>
        <taxon>Gammaproteobacteria</taxon>
        <taxon>Enterobacterales</taxon>
        <taxon>Yersiniaceae</taxon>
        <taxon>Yersinia</taxon>
    </lineage>
</organism>
<evidence type="ECO:0000255" key="1">
    <source>
        <dbReference type="HAMAP-Rule" id="MF_01248"/>
    </source>
</evidence>
<accession>B1JHX8</accession>
<keyword id="KW-0119">Carbohydrate metabolism</keyword>
<keyword id="KW-0321">Glycogen metabolism</keyword>
<keyword id="KW-0326">Glycosidase</keyword>
<keyword id="KW-0378">Hydrolase</keyword>
<proteinExistence type="inferred from homology"/>